<comment type="function">
    <text evidence="1 5">Required for assembly of dynein regulatory complex (DRC) and inner dynein arm (IDA) complexes, which are responsible for ciliary beat regulation, thereby playing a central role in motility in cilia and flagella (PubMed:21131974). Probably acts together with CCDC39 to form a molecular ruler that determines the 96 nanometer (nm) repeat length and arrangements of components in cilia and flagella (By similarity). Not required for outer dynein arm complexes assembly. Required for axonemal recruitment of CCDC39 (PubMed:21131974).</text>
</comment>
<comment type="interaction">
    <interactant intactId="EBI-11943297">
        <id>Q4G0X9-5</id>
    </interactant>
    <interactant intactId="EBI-11521003">
        <id>Q9UIA0</id>
        <label>CYTH4</label>
    </interactant>
    <organismsDiffer>false</organismsDiffer>
    <experiments>3</experiments>
</comment>
<comment type="subcellular location">
    <subcellularLocation>
        <location evidence="2">Cytoplasm</location>
    </subcellularLocation>
    <subcellularLocation>
        <location evidence="10">Cell projection</location>
        <location evidence="10">Cilium</location>
    </subcellularLocation>
    <text evidence="2">Localizes to cytoplasm and motile cilium.</text>
</comment>
<comment type="alternative products">
    <event type="alternative splicing"/>
    <isoform>
        <id>Q4G0X9-1</id>
        <name>1</name>
        <sequence type="displayed"/>
    </isoform>
    <isoform>
        <id>Q4G0X9-2</id>
        <name>2</name>
        <sequence type="described" ref="VSP_028308 VSP_028309"/>
    </isoform>
    <isoform>
        <id>Q4G0X9-3</id>
        <name>3</name>
        <sequence type="described" ref="VSP_028302 VSP_028303"/>
    </isoform>
    <isoform>
        <id>Q4G0X9-4</id>
        <name>4</name>
        <sequence type="described" ref="VSP_028306 VSP_028307"/>
    </isoform>
    <isoform>
        <id>Q4G0X9-5</id>
        <name>5</name>
        <sequence type="described" ref="VSP_028304 VSP_028305"/>
    </isoform>
</comment>
<comment type="disease" evidence="5 6 7 8 9">
    <disease id="DI-03025">
        <name>Ciliary dyskinesia, primary, 15</name>
        <acronym>CILD15</acronym>
        <description>A disorder characterized by abnormalities of motile cilia. Respiratory infections leading to chronic inflammation and bronchiectasis are recurrent, due to defects in the respiratory cilia; reduced fertility is often observed in male patients due to abnormalities of sperm tails. Half of the patients exhibit randomization of left-right body asymmetry and situs inversus, due to dysfunction of monocilia at the embryonic node. Primary ciliary dyskinesia associated with situs inversus is referred to as Kartagener syndrome.</description>
        <dbReference type="MIM" id="613808"/>
    </disease>
    <text evidence="6 7">The disease is caused by variants affecting the gene represented in this entry. The disease is characterized by primary ciliary dyskinesia with inner dynein arm (IDA) defects and axonemal dizorganisation: defects in CCDC39 and CCDC40 constitute the major cause of this phenotype.</text>
</comment>
<comment type="similarity">
    <text evidence="14">Belongs to the CCDC40 family.</text>
</comment>
<comment type="sequence caution" evidence="14">
    <conflict type="erroneous initiation">
        <sequence resource="EMBL-CDS" id="BAB13466"/>
    </conflict>
    <text>Extended N-terminus.</text>
</comment>
<comment type="online information" name="Protein Spotlight">
    <link uri="https://www.proteinspotlight.org/back_issues/170/"/>
    <text>The length of things - Issue 170 of June 2015</text>
</comment>
<gene>
    <name evidence="15" type="primary">CCDC40</name>
    <name evidence="11" type="synonym">KIAA1640</name>
</gene>
<keyword id="KW-0002">3D-structure</keyword>
<keyword id="KW-0025">Alternative splicing</keyword>
<keyword id="KW-0966">Cell projection</keyword>
<keyword id="KW-1186">Ciliopathy</keyword>
<keyword id="KW-0969">Cilium</keyword>
<keyword id="KW-0175">Coiled coil</keyword>
<keyword id="KW-0963">Cytoplasm</keyword>
<keyword id="KW-1012">Kartagener syndrome</keyword>
<keyword id="KW-0597">Phosphoprotein</keyword>
<keyword id="KW-0990">Primary ciliary dyskinesia</keyword>
<keyword id="KW-1267">Proteomics identification</keyword>
<keyword id="KW-1185">Reference proteome</keyword>
<name>CCD40_HUMAN</name>
<protein>
    <recommendedName>
        <fullName evidence="14">Coiled-coil domain-containing protein 40</fullName>
    </recommendedName>
</protein>
<proteinExistence type="evidence at protein level"/>
<feature type="chain" id="PRO_0000305250" description="Coiled-coil domain-containing protein 40">
    <location>
        <begin position="1"/>
        <end position="1142"/>
    </location>
</feature>
<feature type="region of interest" description="Disordered" evidence="4">
    <location>
        <begin position="1"/>
        <end position="197"/>
    </location>
</feature>
<feature type="region of interest" description="Disordered" evidence="4">
    <location>
        <begin position="251"/>
        <end position="274"/>
    </location>
</feature>
<feature type="coiled-coil region" evidence="3">
    <location>
        <begin position="293"/>
        <end position="319"/>
    </location>
</feature>
<feature type="coiled-coil region" evidence="3">
    <location>
        <begin position="349"/>
        <end position="470"/>
    </location>
</feature>
<feature type="coiled-coil region" evidence="3">
    <location>
        <begin position="526"/>
        <end position="627"/>
    </location>
</feature>
<feature type="coiled-coil region" evidence="3">
    <location>
        <begin position="684"/>
        <end position="950"/>
    </location>
</feature>
<feature type="coiled-coil region" evidence="3">
    <location>
        <begin position="1005"/>
        <end position="1054"/>
    </location>
</feature>
<feature type="compositionally biased region" description="Basic and acidic residues" evidence="4">
    <location>
        <begin position="11"/>
        <end position="27"/>
    </location>
</feature>
<feature type="compositionally biased region" description="Basic and acidic residues" evidence="4">
    <location>
        <begin position="35"/>
        <end position="55"/>
    </location>
</feature>
<feature type="compositionally biased region" description="Acidic residues" evidence="4">
    <location>
        <begin position="63"/>
        <end position="96"/>
    </location>
</feature>
<feature type="compositionally biased region" description="Acidic residues" evidence="4">
    <location>
        <begin position="265"/>
        <end position="274"/>
    </location>
</feature>
<feature type="modified residue" description="Phosphoserine" evidence="2">
    <location>
        <position position="252"/>
    </location>
</feature>
<feature type="splice variant" id="VSP_028302" description="In isoform 3." evidence="11">
    <location>
        <begin position="1"/>
        <end position="217"/>
    </location>
</feature>
<feature type="splice variant" id="VSP_028303" description="In isoform 3." evidence="11">
    <original>EEFVSQEP</original>
    <variation>MVSLSLPP</variation>
    <location>
        <begin position="218"/>
        <end position="225"/>
    </location>
</feature>
<feature type="splice variant" id="VSP_028304" description="In isoform 5." evidence="13">
    <original>DLYVDQLTTRAQQLEEDIALFEAQYLAQAEDTRILRKAV</original>
    <variation>GVGDTGAAFIPKTTQGDQVSGRGKKKPGTVVARVSPAEL</variation>
    <location>
        <begin position="440"/>
        <end position="478"/>
    </location>
</feature>
<feature type="splice variant" id="VSP_028305" description="In isoform 5." evidence="13">
    <location>
        <begin position="479"/>
        <end position="1142"/>
    </location>
</feature>
<feature type="splice variant" id="VSP_028306" description="In isoform 4." evidence="12">
    <original>RGCQHQAKSTDGEIEAYKKSIMKEEEKNEKLASILNRTETEATLLQKLTTQCLTKQVAL</original>
    <variation>SVSLERFPSQNINTARSRLSTTWHSAGILLRGSFLPGASRAFASVCYGGAAVDNRIREC</variation>
    <location>
        <begin position="521"/>
        <end position="579"/>
    </location>
</feature>
<feature type="splice variant" id="VSP_028307" description="In isoform 4." evidence="12">
    <location>
        <begin position="580"/>
        <end position="1142"/>
    </location>
</feature>
<feature type="splice variant" id="VSP_028308" description="In isoform 2." evidence="13">
    <original>VRLGQLLKQQEKMIRAMELAVARRETVTTQAEGQRKMDRKALTRTDFHHKQLELRRKIRDVRKATDECTKTVLELEETQRNVSSSL</original>
    <variation>KYCRTTQDAHRHVHEQHGTHAGTCTKNTGRAQARARTTRDARGHVHEQHGTRAGTCTNNTGRAQARARTRDARRHVHEHRTHTARA</variation>
    <location>
        <begin position="945"/>
        <end position="1030"/>
    </location>
</feature>
<feature type="splice variant" id="VSP_028309" description="In isoform 2." evidence="13">
    <location>
        <begin position="1031"/>
        <end position="1142"/>
    </location>
</feature>
<feature type="sequence variant" id="VAR_035193" description="In dbSNP:rs2289530.">
    <original>A</original>
    <variation>P</variation>
    <location>
        <position position="8"/>
    </location>
</feature>
<feature type="sequence conflict" description="In Ref. 2; BAA91365." evidence="14" ref="2">
    <original>F</original>
    <variation>L</variation>
    <location>
        <position position="117"/>
    </location>
</feature>
<feature type="sequence conflict" description="In Ref. 5; AAH35251." evidence="14" ref="5">
    <original>K</original>
    <variation>R</variation>
    <location>
        <position position="362"/>
    </location>
</feature>
<feature type="sequence conflict" description="In Ref. 2; BAA91365 and 5; AAH35251." evidence="14" ref="2 5">
    <original>Q</original>
    <variation>R</variation>
    <location>
        <position position="405"/>
    </location>
</feature>
<feature type="sequence conflict" description="In Ref. 5; AAH35251." evidence="14" ref="5">
    <original>S</original>
    <variation>G</variation>
    <location>
        <position position="553"/>
    </location>
</feature>
<feature type="sequence conflict" description="In Ref. 5; AAH35251." evidence="14" ref="5">
    <original>E</original>
    <variation>G</variation>
    <location>
        <position position="816"/>
    </location>
</feature>
<feature type="sequence conflict" description="In Ref. 5; AAH35251." evidence="14" ref="5">
    <original>Q</original>
    <variation>R</variation>
    <location sequence="Q4G0X9-2">
        <position position="951"/>
    </location>
</feature>
<feature type="sequence conflict" description="In Ref. 5; AAH35251." evidence="14" ref="5">
    <original>H</original>
    <variation>R</variation>
    <location sequence="Q4G0X9-2">
        <position position="954"/>
    </location>
</feature>
<feature type="sequence conflict" description="In Ref. 5; AAH35251." evidence="14" ref="5">
    <original>H</original>
    <variation>R</variation>
    <location sequence="Q4G0X9-2">
        <position position="964"/>
    </location>
</feature>
<feature type="sequence conflict" description="In Ref. 5; AAH35251." evidence="14" ref="5">
    <original>K</original>
    <variation>N</variation>
    <location sequence="Q4G0X9-2">
        <position position="970"/>
    </location>
</feature>
<feature type="sequence conflict" description="In Ref. 5; AAH35251." evidence="14" ref="5">
    <original>G</original>
    <variation>R</variation>
    <location sequence="Q4G0X9-2">
        <position position="987"/>
    </location>
</feature>
<feature type="sequence conflict" description="In Ref. 5; AAH35251." evidence="14" ref="5">
    <original>T</original>
    <variation>TT</variation>
    <location sequence="Q4G0X9-2">
        <position position="1013"/>
    </location>
</feature>
<feature type="sequence conflict" description="In Ref. 1; BAB13466." evidence="14" ref="1">
    <original>P</original>
    <variation>A</variation>
    <location sequence="Q4G0X9-3">
        <position position="8"/>
    </location>
</feature>
<feature type="sequence conflict" description="In Ref. 2; BAA91365." evidence="14" ref="2">
    <original>A</original>
    <variation>T</variation>
    <location sequence="Q4G0X9-4">
        <position position="570"/>
    </location>
</feature>
<accession>Q4G0X9</accession>
<accession>A8MTD2</accession>
<accession>C9JTI9</accession>
<accession>C9JTJ0</accession>
<accession>C9JXW1</accession>
<accession>J3QSY2</accession>
<accession>Q6PE47</accession>
<accession>Q9HCD2</accession>
<accession>Q9NWL5</accession>
<reference key="1">
    <citation type="journal article" date="2000" name="DNA Res.">
        <title>Prediction of the coding sequences of unidentified human genes. XVIII. The complete sequences of 100 new cDNA clones from brain which code for large proteins in vitro.</title>
        <authorList>
            <person name="Nagase T."/>
            <person name="Kikuno R."/>
            <person name="Nakayama M."/>
            <person name="Hirosawa M."/>
            <person name="Ohara O."/>
        </authorList>
    </citation>
    <scope>NUCLEOTIDE SEQUENCE [LARGE SCALE MRNA] (ISOFORM 3)</scope>
    <source>
        <tissue>Brain</tissue>
    </source>
</reference>
<reference key="2">
    <citation type="journal article" date="2004" name="Nat. Genet.">
        <title>Complete sequencing and characterization of 21,243 full-length human cDNAs.</title>
        <authorList>
            <person name="Ota T."/>
            <person name="Suzuki Y."/>
            <person name="Nishikawa T."/>
            <person name="Otsuki T."/>
            <person name="Sugiyama T."/>
            <person name="Irie R."/>
            <person name="Wakamatsu A."/>
            <person name="Hayashi K."/>
            <person name="Sato H."/>
            <person name="Nagai K."/>
            <person name="Kimura K."/>
            <person name="Makita H."/>
            <person name="Sekine M."/>
            <person name="Obayashi M."/>
            <person name="Nishi T."/>
            <person name="Shibahara T."/>
            <person name="Tanaka T."/>
            <person name="Ishii S."/>
            <person name="Yamamoto J."/>
            <person name="Saito K."/>
            <person name="Kawai Y."/>
            <person name="Isono Y."/>
            <person name="Nakamura Y."/>
            <person name="Nagahari K."/>
            <person name="Murakami K."/>
            <person name="Yasuda T."/>
            <person name="Iwayanagi T."/>
            <person name="Wagatsuma M."/>
            <person name="Shiratori A."/>
            <person name="Sudo H."/>
            <person name="Hosoiri T."/>
            <person name="Kaku Y."/>
            <person name="Kodaira H."/>
            <person name="Kondo H."/>
            <person name="Sugawara M."/>
            <person name="Takahashi M."/>
            <person name="Kanda K."/>
            <person name="Yokoi T."/>
            <person name="Furuya T."/>
            <person name="Kikkawa E."/>
            <person name="Omura Y."/>
            <person name="Abe K."/>
            <person name="Kamihara K."/>
            <person name="Katsuta N."/>
            <person name="Sato K."/>
            <person name="Tanikawa M."/>
            <person name="Yamazaki M."/>
            <person name="Ninomiya K."/>
            <person name="Ishibashi T."/>
            <person name="Yamashita H."/>
            <person name="Murakawa K."/>
            <person name="Fujimori K."/>
            <person name="Tanai H."/>
            <person name="Kimata M."/>
            <person name="Watanabe M."/>
            <person name="Hiraoka S."/>
            <person name="Chiba Y."/>
            <person name="Ishida S."/>
            <person name="Ono Y."/>
            <person name="Takiguchi S."/>
            <person name="Watanabe S."/>
            <person name="Yosida M."/>
            <person name="Hotuta T."/>
            <person name="Kusano J."/>
            <person name="Kanehori K."/>
            <person name="Takahashi-Fujii A."/>
            <person name="Hara H."/>
            <person name="Tanase T.-O."/>
            <person name="Nomura Y."/>
            <person name="Togiya S."/>
            <person name="Komai F."/>
            <person name="Hara R."/>
            <person name="Takeuchi K."/>
            <person name="Arita M."/>
            <person name="Imose N."/>
            <person name="Musashino K."/>
            <person name="Yuuki H."/>
            <person name="Oshima A."/>
            <person name="Sasaki N."/>
            <person name="Aotsuka S."/>
            <person name="Yoshikawa Y."/>
            <person name="Matsunawa H."/>
            <person name="Ichihara T."/>
            <person name="Shiohata N."/>
            <person name="Sano S."/>
            <person name="Moriya S."/>
            <person name="Momiyama H."/>
            <person name="Satoh N."/>
            <person name="Takami S."/>
            <person name="Terashima Y."/>
            <person name="Suzuki O."/>
            <person name="Nakagawa S."/>
            <person name="Senoh A."/>
            <person name="Mizoguchi H."/>
            <person name="Goto Y."/>
            <person name="Shimizu F."/>
            <person name="Wakebe H."/>
            <person name="Hishigaki H."/>
            <person name="Watanabe T."/>
            <person name="Sugiyama A."/>
            <person name="Takemoto M."/>
            <person name="Kawakami B."/>
            <person name="Yamazaki M."/>
            <person name="Watanabe K."/>
            <person name="Kumagai A."/>
            <person name="Itakura S."/>
            <person name="Fukuzumi Y."/>
            <person name="Fujimori Y."/>
            <person name="Komiyama M."/>
            <person name="Tashiro H."/>
            <person name="Tanigami A."/>
            <person name="Fujiwara T."/>
            <person name="Ono T."/>
            <person name="Yamada K."/>
            <person name="Fujii Y."/>
            <person name="Ozaki K."/>
            <person name="Hirao M."/>
            <person name="Ohmori Y."/>
            <person name="Kawabata A."/>
            <person name="Hikiji T."/>
            <person name="Kobatake N."/>
            <person name="Inagaki H."/>
            <person name="Ikema Y."/>
            <person name="Okamoto S."/>
            <person name="Okitani R."/>
            <person name="Kawakami T."/>
            <person name="Noguchi S."/>
            <person name="Itoh T."/>
            <person name="Shigeta K."/>
            <person name="Senba T."/>
            <person name="Matsumura K."/>
            <person name="Nakajima Y."/>
            <person name="Mizuno T."/>
            <person name="Morinaga M."/>
            <person name="Sasaki M."/>
            <person name="Togashi T."/>
            <person name="Oyama M."/>
            <person name="Hata H."/>
            <person name="Watanabe M."/>
            <person name="Komatsu T."/>
            <person name="Mizushima-Sugano J."/>
            <person name="Satoh T."/>
            <person name="Shirai Y."/>
            <person name="Takahashi Y."/>
            <person name="Nakagawa K."/>
            <person name="Okumura K."/>
            <person name="Nagase T."/>
            <person name="Nomura N."/>
            <person name="Kikuchi H."/>
            <person name="Masuho Y."/>
            <person name="Yamashita R."/>
            <person name="Nakai K."/>
            <person name="Yada T."/>
            <person name="Nakamura Y."/>
            <person name="Ohara O."/>
            <person name="Isogai T."/>
            <person name="Sugano S."/>
        </authorList>
    </citation>
    <scope>NUCLEOTIDE SEQUENCE [LARGE SCALE MRNA] (ISOFORM 4)</scope>
    <source>
        <tissue>Hepatoma</tissue>
    </source>
</reference>
<reference key="3">
    <citation type="journal article" date="2006" name="Nature">
        <title>DNA sequence of human chromosome 17 and analysis of rearrangement in the human lineage.</title>
        <authorList>
            <person name="Zody M.C."/>
            <person name="Garber M."/>
            <person name="Adams D.J."/>
            <person name="Sharpe T."/>
            <person name="Harrow J."/>
            <person name="Lupski J.R."/>
            <person name="Nicholson C."/>
            <person name="Searle S.M."/>
            <person name="Wilming L."/>
            <person name="Young S.K."/>
            <person name="Abouelleil A."/>
            <person name="Allen N.R."/>
            <person name="Bi W."/>
            <person name="Bloom T."/>
            <person name="Borowsky M.L."/>
            <person name="Bugalter B.E."/>
            <person name="Butler J."/>
            <person name="Chang J.L."/>
            <person name="Chen C.-K."/>
            <person name="Cook A."/>
            <person name="Corum B."/>
            <person name="Cuomo C.A."/>
            <person name="de Jong P.J."/>
            <person name="DeCaprio D."/>
            <person name="Dewar K."/>
            <person name="FitzGerald M."/>
            <person name="Gilbert J."/>
            <person name="Gibson R."/>
            <person name="Gnerre S."/>
            <person name="Goldstein S."/>
            <person name="Grafham D.V."/>
            <person name="Grocock R."/>
            <person name="Hafez N."/>
            <person name="Hagopian D.S."/>
            <person name="Hart E."/>
            <person name="Norman C.H."/>
            <person name="Humphray S."/>
            <person name="Jaffe D.B."/>
            <person name="Jones M."/>
            <person name="Kamal M."/>
            <person name="Khodiyar V.K."/>
            <person name="LaButti K."/>
            <person name="Laird G."/>
            <person name="Lehoczky J."/>
            <person name="Liu X."/>
            <person name="Lokyitsang T."/>
            <person name="Loveland J."/>
            <person name="Lui A."/>
            <person name="Macdonald P."/>
            <person name="Major J.E."/>
            <person name="Matthews L."/>
            <person name="Mauceli E."/>
            <person name="McCarroll S.A."/>
            <person name="Mihalev A.H."/>
            <person name="Mudge J."/>
            <person name="Nguyen C."/>
            <person name="Nicol R."/>
            <person name="O'Leary S.B."/>
            <person name="Osoegawa K."/>
            <person name="Schwartz D.C."/>
            <person name="Shaw-Smith C."/>
            <person name="Stankiewicz P."/>
            <person name="Steward C."/>
            <person name="Swarbreck D."/>
            <person name="Venkataraman V."/>
            <person name="Whittaker C.A."/>
            <person name="Yang X."/>
            <person name="Zimmer A.R."/>
            <person name="Bradley A."/>
            <person name="Hubbard T."/>
            <person name="Birren B.W."/>
            <person name="Rogers J."/>
            <person name="Lander E.S."/>
            <person name="Nusbaum C."/>
        </authorList>
    </citation>
    <scope>NUCLEOTIDE SEQUENCE [LARGE SCALE GENOMIC DNA]</scope>
</reference>
<reference key="4">
    <citation type="submission" date="2005-07" db="EMBL/GenBank/DDBJ databases">
        <authorList>
            <person name="Mural R.J."/>
            <person name="Istrail S."/>
            <person name="Sutton G.G."/>
            <person name="Florea L."/>
            <person name="Halpern A.L."/>
            <person name="Mobarry C.M."/>
            <person name="Lippert R."/>
            <person name="Walenz B."/>
            <person name="Shatkay H."/>
            <person name="Dew I."/>
            <person name="Miller J.R."/>
            <person name="Flanigan M.J."/>
            <person name="Edwards N.J."/>
            <person name="Bolanos R."/>
            <person name="Fasulo D."/>
            <person name="Halldorsson B.V."/>
            <person name="Hannenhalli S."/>
            <person name="Turner R."/>
            <person name="Yooseph S."/>
            <person name="Lu F."/>
            <person name="Nusskern D.R."/>
            <person name="Shue B.C."/>
            <person name="Zheng X.H."/>
            <person name="Zhong F."/>
            <person name="Delcher A.L."/>
            <person name="Huson D.H."/>
            <person name="Kravitz S.A."/>
            <person name="Mouchard L."/>
            <person name="Reinert K."/>
            <person name="Remington K.A."/>
            <person name="Clark A.G."/>
            <person name="Waterman M.S."/>
            <person name="Eichler E.E."/>
            <person name="Adams M.D."/>
            <person name="Hunkapiller M.W."/>
            <person name="Myers E.W."/>
            <person name="Venter J.C."/>
        </authorList>
    </citation>
    <scope>NUCLEOTIDE SEQUENCE [LARGE SCALE GENOMIC DNA]</scope>
</reference>
<reference key="5">
    <citation type="journal article" date="2004" name="Genome Res.">
        <title>The status, quality, and expansion of the NIH full-length cDNA project: the Mammalian Gene Collection (MGC).</title>
        <authorList>
            <consortium name="The MGC Project Team"/>
        </authorList>
    </citation>
    <scope>NUCLEOTIDE SEQUENCE [LARGE SCALE MRNA] (ISOFORMS 2 AND 5)</scope>
    <source>
        <tissue>Prostate</tissue>
        <tissue>Testis</tissue>
    </source>
</reference>
<reference key="6">
    <citation type="journal article" date="2011" name="Nat. Genet.">
        <title>The coiled-coil domain containing protein CCDC40 is essential for motile cilia function and left-right axis formation.</title>
        <authorList>
            <person name="Becker-Heck A."/>
            <person name="Zohn I.E."/>
            <person name="Okabe N."/>
            <person name="Pollock A."/>
            <person name="Lenhart K.B."/>
            <person name="Sullivan-Brown J."/>
            <person name="McSheene J."/>
            <person name="Loges N.T."/>
            <person name="Olbrich H."/>
            <person name="Haeffner K."/>
            <person name="Fliegauf M."/>
            <person name="Horvath J."/>
            <person name="Reinhardt R."/>
            <person name="Nielsen K.G."/>
            <person name="Marthin J.K."/>
            <person name="Baktai G."/>
            <person name="Anderson K.V."/>
            <person name="Geisler R."/>
            <person name="Niswander L."/>
            <person name="Omran H."/>
            <person name="Burdine R.D."/>
        </authorList>
    </citation>
    <scope>FUNCTION</scope>
    <scope>INVOLVEMENT IN CILD15</scope>
</reference>
<reference key="7">
    <citation type="journal article" date="2012" name="J. Med. Genet.">
        <title>Delineation of CCDC39/CCDC40 mutation spectrum and associated phenotypes in primary ciliary dyskinesia.</title>
        <authorList>
            <person name="Blanchon S."/>
            <person name="Legendre M."/>
            <person name="Copin B."/>
            <person name="Duquesnoy P."/>
            <person name="Montantin G."/>
            <person name="Kott E."/>
            <person name="Dastot F."/>
            <person name="Jeanson L."/>
            <person name="Cachanado M."/>
            <person name="Rousseau A."/>
            <person name="Papon J.F."/>
            <person name="Beydon N."/>
            <person name="Brouard J."/>
            <person name="Crestani B."/>
            <person name="Deschildre A."/>
            <person name="Desir J."/>
            <person name="Dollfus H."/>
            <person name="Leheup B."/>
            <person name="Tamalet A."/>
            <person name="Thumerelle C."/>
            <person name="Vojtek A.M."/>
            <person name="Escalier D."/>
            <person name="Coste A."/>
            <person name="de Blic J."/>
            <person name="Clement A."/>
            <person name="Escudier E."/>
            <person name="Amselem S."/>
        </authorList>
    </citation>
    <scope>INVOLVEMENT IN CILD15</scope>
</reference>
<reference key="8">
    <citation type="journal article" date="2013" name="Hum. Mutat.">
        <title>Mutations in CCDC39 and CCDC40 are the major cause of primary ciliary dyskinesia with axonemal disorganization and absent inner dynein arms.</title>
        <authorList>
            <person name="Antony D."/>
            <person name="Becker-Heck A."/>
            <person name="Zariwala M.A."/>
            <person name="Schmidts M."/>
            <person name="Onoufriadis A."/>
            <person name="Forouhan M."/>
            <person name="Wilson R."/>
            <person name="Taylor-Cox T."/>
            <person name="Dewar A."/>
            <person name="Jackson C."/>
            <person name="Goggin P."/>
            <person name="Loges N.T."/>
            <person name="Olbrich H."/>
            <person name="Jaspers M."/>
            <person name="Jorissen M."/>
            <person name="Leigh M.W."/>
            <person name="Wolf W.E."/>
            <person name="Daniels M.L."/>
            <person name="Noone P.G."/>
            <person name="Ferkol T.W."/>
            <person name="Sagel S.D."/>
            <person name="Rosenfeld M."/>
            <person name="Rutman A."/>
            <person name="Dixit A."/>
            <person name="O'Callaghan C."/>
            <person name="Lucas J.S."/>
            <person name="Hogg C."/>
            <person name="Scambler P.J."/>
            <person name="Emes R.D."/>
            <person name="Chung E.M."/>
            <person name="Shoemark A."/>
            <person name="Knowles M.R."/>
            <person name="Omran H."/>
            <person name="Mitchison H.M."/>
            <person name="Al-Turki S."/>
            <person name="Anderson C."/>
            <person name="Antony D."/>
            <person name="Barroso I."/>
            <person name="Beales P."/>
            <person name="Bentham J."/>
            <person name="Bertolini S."/>
            <person name="Bhattacharya S."/>
            <person name="Calandra S."/>
            <person name="Carss K."/>
            <person name="Chatterjee K."/>
            <person name="Cirak S."/>
            <person name="Cosgrove C."/>
            <person name="Daly A."/>
            <person name="Danecek P."/>
            <person name="Durbin R."/>
            <person name="Fitzpatrick D."/>
            <person name="Floyd J."/>
            <person name="Foley R."/>
            <person name="Franklin C."/>
            <person name="Futema M."/>
            <person name="Graham C."/>
            <person name="Humphries S."/>
            <person name="Hurles M."/>
            <person name="Joyce C."/>
            <person name="Leitersdorf E."/>
            <person name="McCarthy S."/>
            <person name="Mitchison H.M."/>
            <person name="Muddyman D."/>
            <person name="Muntoni F."/>
            <person name="Neil A."/>
            <person name="O'Rahilly S."/>
            <person name="Onoufriadis A."/>
            <person name="Parker V."/>
            <person name="Payne F."/>
            <person name="Plagnol V."/>
            <person name="Raymond L."/>
            <person name="Savage D.B."/>
            <person name="Scambler P."/>
            <person name="Schmidts M."/>
            <person name="Schoenmakers N."/>
            <person name="Seed M."/>
            <person name="Semple R."/>
            <person name="Serra E."/>
            <person name="Stalker J."/>
            <person name="Van Bockxmeer F."/>
            <person name="van Kogelenberg M."/>
            <person name="Vijayarangakannan P."/>
            <person name="Walter K."/>
            <person name="Whittall R."/>
            <person name="Williamson K."/>
        </authorList>
    </citation>
    <scope>INVOLVEMENT IN CILD15</scope>
</reference>
<reference key="9">
    <citation type="journal article" date="2013" name="Gene">
        <title>Identification of the first deletion-insertion involving the complete structure of GAA gene and part of CCDC40 gene mediated by an Alu element.</title>
        <authorList>
            <person name="Aminoso C."/>
            <person name="Vallespin E."/>
            <person name="Fernandez L."/>
            <person name="Arrabal L.F."/>
            <person name="Desviat L.R."/>
            <person name="Perez B."/>
            <person name="Santos F."/>
            <person name="Solera J."/>
        </authorList>
    </citation>
    <scope>INVOLVEMENT IN CILD15</scope>
</reference>
<reference key="10">
    <citation type="journal article" date="2014" name="Eur. Respir. J.">
        <title>Ciliary beat pattern and frequency in genetic variants of primary ciliary dyskinesia.</title>
        <authorList>
            <person name="Raidt J."/>
            <person name="Wallmeier J."/>
            <person name="Hjeij R."/>
            <person name="Onnebrink J.G."/>
            <person name="Pennekamp P."/>
            <person name="Loges N.T."/>
            <person name="Olbrich H."/>
            <person name="Haeffner K."/>
            <person name="Dougherty G.W."/>
            <person name="Omran H."/>
            <person name="Werner C."/>
        </authorList>
    </citation>
    <scope>INVOLVEMENT IN CILD15</scope>
</reference>
<reference key="11">
    <citation type="journal article" date="2016" name="Hum. Mutat.">
        <title>Mutations in GAS8, a gene encoding a nexin-dynein regulatory complex subunit, cause primary ciliary dyskinesia with axonemal disorganization.</title>
        <authorList>
            <person name="Jeanson L."/>
            <person name="Thomas L."/>
            <person name="Copin B."/>
            <person name="Coste A."/>
            <person name="Sermet-Gaudelus I."/>
            <person name="Dastot-Le Moal F."/>
            <person name="Duquesnoy P."/>
            <person name="Montantin G."/>
            <person name="Collot N."/>
            <person name="Tissier S."/>
            <person name="Papon J.F."/>
            <person name="Clement A."/>
            <person name="Louis B."/>
            <person name="Escudier E."/>
            <person name="Amselem S."/>
            <person name="Legendre M."/>
        </authorList>
    </citation>
    <scope>SUBCELLULAR LOCATION</scope>
</reference>
<evidence type="ECO:0000250" key="1">
    <source>
        <dbReference type="UniProtKB" id="A8IQT2"/>
    </source>
</evidence>
<evidence type="ECO:0000250" key="2">
    <source>
        <dbReference type="UniProtKB" id="Q8BI79"/>
    </source>
</evidence>
<evidence type="ECO:0000255" key="3"/>
<evidence type="ECO:0000256" key="4">
    <source>
        <dbReference type="SAM" id="MobiDB-lite"/>
    </source>
</evidence>
<evidence type="ECO:0000269" key="5">
    <source>
    </source>
</evidence>
<evidence type="ECO:0000269" key="6">
    <source>
    </source>
</evidence>
<evidence type="ECO:0000269" key="7">
    <source>
    </source>
</evidence>
<evidence type="ECO:0000269" key="8">
    <source>
    </source>
</evidence>
<evidence type="ECO:0000269" key="9">
    <source>
    </source>
</evidence>
<evidence type="ECO:0000269" key="10">
    <source>
    </source>
</evidence>
<evidence type="ECO:0000303" key="11">
    <source>
    </source>
</evidence>
<evidence type="ECO:0000303" key="12">
    <source>
    </source>
</evidence>
<evidence type="ECO:0000303" key="13">
    <source>
    </source>
</evidence>
<evidence type="ECO:0000305" key="14"/>
<evidence type="ECO:0000312" key="15">
    <source>
        <dbReference type="HGNC" id="HGNC:26090"/>
    </source>
</evidence>
<organism>
    <name type="scientific">Homo sapiens</name>
    <name type="common">Human</name>
    <dbReference type="NCBI Taxonomy" id="9606"/>
    <lineage>
        <taxon>Eukaryota</taxon>
        <taxon>Metazoa</taxon>
        <taxon>Chordata</taxon>
        <taxon>Craniata</taxon>
        <taxon>Vertebrata</taxon>
        <taxon>Euteleostomi</taxon>
        <taxon>Mammalia</taxon>
        <taxon>Eutheria</taxon>
        <taxon>Euarchontoglires</taxon>
        <taxon>Primates</taxon>
        <taxon>Haplorrhini</taxon>
        <taxon>Catarrhini</taxon>
        <taxon>Hominidae</taxon>
        <taxon>Homo</taxon>
    </lineage>
</organism>
<dbReference type="EMBL" id="AB046860">
    <property type="protein sequence ID" value="BAB13466.1"/>
    <property type="status" value="ALT_INIT"/>
    <property type="molecule type" value="mRNA"/>
</dbReference>
<dbReference type="EMBL" id="AK000760">
    <property type="protein sequence ID" value="BAA91365.1"/>
    <property type="molecule type" value="mRNA"/>
</dbReference>
<dbReference type="EMBL" id="AC087741">
    <property type="status" value="NOT_ANNOTATED_CDS"/>
    <property type="molecule type" value="Genomic_DNA"/>
</dbReference>
<dbReference type="EMBL" id="AC116025">
    <property type="status" value="NOT_ANNOTATED_CDS"/>
    <property type="molecule type" value="Genomic_DNA"/>
</dbReference>
<dbReference type="EMBL" id="CH471099">
    <property type="protein sequence ID" value="EAW89578.1"/>
    <property type="molecule type" value="Genomic_DNA"/>
</dbReference>
<dbReference type="EMBL" id="CH471099">
    <property type="protein sequence ID" value="EAW89579.1"/>
    <property type="molecule type" value="Genomic_DNA"/>
</dbReference>
<dbReference type="EMBL" id="BC035251">
    <property type="protein sequence ID" value="AAH35251.1"/>
    <property type="molecule type" value="mRNA"/>
</dbReference>
<dbReference type="EMBL" id="BC058288">
    <property type="protein sequence ID" value="AAH58288.1"/>
    <property type="molecule type" value="mRNA"/>
</dbReference>
<dbReference type="CCDS" id="CCDS42395.1">
    <molecule id="Q4G0X9-1"/>
</dbReference>
<dbReference type="CCDS" id="CCDS58604.1">
    <molecule id="Q4G0X9-2"/>
</dbReference>
<dbReference type="CCDS" id="CCDS82212.1">
    <molecule id="Q4G0X9-4"/>
</dbReference>
<dbReference type="RefSeq" id="NP_001230271.1">
    <molecule id="Q4G0X9-2"/>
    <property type="nucleotide sequence ID" value="NM_001243342.2"/>
</dbReference>
<dbReference type="RefSeq" id="NP_001317437.1">
    <molecule id="Q4G0X9-4"/>
    <property type="nucleotide sequence ID" value="NM_001330508.2"/>
</dbReference>
<dbReference type="RefSeq" id="NP_060420.2">
    <molecule id="Q4G0X9-1"/>
    <property type="nucleotide sequence ID" value="NM_017950.3"/>
</dbReference>
<dbReference type="PDB" id="8J07">
    <property type="method" value="EM"/>
    <property type="resolution" value="4.10 A"/>
    <property type="chains" value="h3/h4=1-1142"/>
</dbReference>
<dbReference type="PDBsum" id="8J07"/>
<dbReference type="EMDB" id="EMD-35888"/>
<dbReference type="SMR" id="Q4G0X9"/>
<dbReference type="BioGRID" id="120365">
    <property type="interactions" value="36"/>
</dbReference>
<dbReference type="FunCoup" id="Q4G0X9">
    <property type="interactions" value="152"/>
</dbReference>
<dbReference type="IntAct" id="Q4G0X9">
    <property type="interactions" value="30"/>
</dbReference>
<dbReference type="STRING" id="9606.ENSP00000380679"/>
<dbReference type="iPTMnet" id="Q4G0X9"/>
<dbReference type="PhosphoSitePlus" id="Q4G0X9"/>
<dbReference type="BioMuta" id="CCDC40"/>
<dbReference type="DMDM" id="158706471"/>
<dbReference type="jPOST" id="Q4G0X9"/>
<dbReference type="MassIVE" id="Q4G0X9"/>
<dbReference type="PaxDb" id="9606-ENSP00000380679"/>
<dbReference type="PeptideAtlas" id="Q4G0X9"/>
<dbReference type="ProteomicsDB" id="62140">
    <molecule id="Q4G0X9-1"/>
</dbReference>
<dbReference type="ProteomicsDB" id="62141">
    <molecule id="Q4G0X9-2"/>
</dbReference>
<dbReference type="ProteomicsDB" id="62142">
    <molecule id="Q4G0X9-3"/>
</dbReference>
<dbReference type="ProteomicsDB" id="62143">
    <molecule id="Q4G0X9-4"/>
</dbReference>
<dbReference type="ProteomicsDB" id="62144">
    <molecule id="Q4G0X9-5"/>
</dbReference>
<dbReference type="Antibodypedia" id="9999">
    <property type="antibodies" value="51 antibodies from 14 providers"/>
</dbReference>
<dbReference type="DNASU" id="55036"/>
<dbReference type="Ensembl" id="ENST00000269318.9">
    <molecule id="Q4G0X9-4"/>
    <property type="protein sequence ID" value="ENSP00000269318.5"/>
    <property type="gene ID" value="ENSG00000141519.15"/>
</dbReference>
<dbReference type="Ensembl" id="ENST00000374876.4">
    <molecule id="Q4G0X9-5"/>
    <property type="protein sequence ID" value="ENSP00000364010.4"/>
    <property type="gene ID" value="ENSG00000141519.15"/>
</dbReference>
<dbReference type="Ensembl" id="ENST00000374877.7">
    <molecule id="Q4G0X9-2"/>
    <property type="protein sequence ID" value="ENSP00000364011.3"/>
    <property type="gene ID" value="ENSG00000141519.15"/>
</dbReference>
<dbReference type="Ensembl" id="ENST00000397545.9">
    <molecule id="Q4G0X9-1"/>
    <property type="protein sequence ID" value="ENSP00000380679.4"/>
    <property type="gene ID" value="ENSG00000141519.15"/>
</dbReference>
<dbReference type="Ensembl" id="ENST00000707761.1">
    <molecule id="Q4G0X9-2"/>
    <property type="protein sequence ID" value="ENSP00000516971.1"/>
    <property type="gene ID" value="ENSG00000291505.1"/>
</dbReference>
<dbReference type="Ensembl" id="ENST00000707762.1">
    <molecule id="Q4G0X9-1"/>
    <property type="protein sequence ID" value="ENSP00000516972.1"/>
    <property type="gene ID" value="ENSG00000291505.1"/>
</dbReference>
<dbReference type="Ensembl" id="ENST00000707764.1">
    <molecule id="Q4G0X9-4"/>
    <property type="protein sequence ID" value="ENSP00000516973.1"/>
    <property type="gene ID" value="ENSG00000291505.1"/>
</dbReference>
<dbReference type="Ensembl" id="ENST00000707765.1">
    <molecule id="Q4G0X9-5"/>
    <property type="protein sequence ID" value="ENSP00000516974.1"/>
    <property type="gene ID" value="ENSG00000291505.1"/>
</dbReference>
<dbReference type="GeneID" id="55036"/>
<dbReference type="KEGG" id="hsa:55036"/>
<dbReference type="MANE-Select" id="ENST00000397545.9">
    <property type="protein sequence ID" value="ENSP00000380679.4"/>
    <property type="RefSeq nucleotide sequence ID" value="NM_017950.4"/>
    <property type="RefSeq protein sequence ID" value="NP_060420.2"/>
</dbReference>
<dbReference type="UCSC" id="uc010dht.4">
    <molecule id="Q4G0X9-1"/>
    <property type="organism name" value="human"/>
</dbReference>
<dbReference type="UCSC" id="uc021uem.2">
    <property type="organism name" value="human"/>
</dbReference>
<dbReference type="AGR" id="HGNC:26090"/>
<dbReference type="CTD" id="55036"/>
<dbReference type="DisGeNET" id="55036"/>
<dbReference type="GeneCards" id="CCDC40"/>
<dbReference type="GeneReviews" id="CCDC40"/>
<dbReference type="HGNC" id="HGNC:26090">
    <property type="gene designation" value="CCDC40"/>
</dbReference>
<dbReference type="HPA" id="ENSG00000141519">
    <property type="expression patterns" value="Tissue enhanced (choroid plexus, fallopian tube)"/>
</dbReference>
<dbReference type="MalaCards" id="CCDC40"/>
<dbReference type="MIM" id="613799">
    <property type="type" value="gene"/>
</dbReference>
<dbReference type="MIM" id="613808">
    <property type="type" value="phenotype"/>
</dbReference>
<dbReference type="neXtProt" id="NX_Q4G0X9"/>
<dbReference type="OpenTargets" id="ENSG00000141519"/>
<dbReference type="Orphanet" id="244">
    <property type="disease" value="Primary ciliary dyskinesia"/>
</dbReference>
<dbReference type="PharmGKB" id="PA142672195"/>
<dbReference type="VEuPathDB" id="HostDB:ENSG00000141519"/>
<dbReference type="eggNOG" id="ENOG502QQ91">
    <property type="taxonomic scope" value="Eukaryota"/>
</dbReference>
<dbReference type="GeneTree" id="ENSGT00440000035688"/>
<dbReference type="HOGENOM" id="CLU_008826_0_0_1"/>
<dbReference type="InParanoid" id="Q4G0X9"/>
<dbReference type="OMA" id="RMQRIQK"/>
<dbReference type="OrthoDB" id="188741at2759"/>
<dbReference type="PAN-GO" id="Q4G0X9">
    <property type="GO annotations" value="5 GO annotations based on evolutionary models"/>
</dbReference>
<dbReference type="PhylomeDB" id="Q4G0X9"/>
<dbReference type="TreeFam" id="TF325559"/>
<dbReference type="PathwayCommons" id="Q4G0X9"/>
<dbReference type="SignaLink" id="Q4G0X9"/>
<dbReference type="BioGRID-ORCS" id="55036">
    <property type="hits" value="7 hits in 1148 CRISPR screens"/>
</dbReference>
<dbReference type="ChiTaRS" id="CCDC40">
    <property type="organism name" value="human"/>
</dbReference>
<dbReference type="GenomeRNAi" id="55036"/>
<dbReference type="Pharos" id="Q4G0X9">
    <property type="development level" value="Tbio"/>
</dbReference>
<dbReference type="PRO" id="PR:Q4G0X9"/>
<dbReference type="Proteomes" id="UP000005640">
    <property type="component" value="Chromosome 17"/>
</dbReference>
<dbReference type="RNAct" id="Q4G0X9">
    <property type="molecule type" value="protein"/>
</dbReference>
<dbReference type="Bgee" id="ENSG00000141519">
    <property type="expression patterns" value="Expressed in right uterine tube and 116 other cell types or tissues"/>
</dbReference>
<dbReference type="ExpressionAtlas" id="Q4G0X9">
    <property type="expression patterns" value="baseline and differential"/>
</dbReference>
<dbReference type="GO" id="GO:0005930">
    <property type="term" value="C:axoneme"/>
    <property type="evidence" value="ECO:0000314"/>
    <property type="project" value="SYSCILIA_CCNET"/>
</dbReference>
<dbReference type="GO" id="GO:0005929">
    <property type="term" value="C:cilium"/>
    <property type="evidence" value="ECO:0000314"/>
    <property type="project" value="UniProtKB"/>
</dbReference>
<dbReference type="GO" id="GO:0005737">
    <property type="term" value="C:cytoplasm"/>
    <property type="evidence" value="ECO:0000250"/>
    <property type="project" value="UniProtKB"/>
</dbReference>
<dbReference type="GO" id="GO:0005576">
    <property type="term" value="C:extracellular region"/>
    <property type="evidence" value="ECO:0007669"/>
    <property type="project" value="GOC"/>
</dbReference>
<dbReference type="GO" id="GO:0031514">
    <property type="term" value="C:motile cilium"/>
    <property type="evidence" value="ECO:0007669"/>
    <property type="project" value="Ensembl"/>
</dbReference>
<dbReference type="GO" id="GO:0070286">
    <property type="term" value="P:axonemal dynein complex assembly"/>
    <property type="evidence" value="ECO:0000315"/>
    <property type="project" value="UniProtKB"/>
</dbReference>
<dbReference type="GO" id="GO:0035082">
    <property type="term" value="P:axoneme assembly"/>
    <property type="evidence" value="ECO:0000318"/>
    <property type="project" value="GO_Central"/>
</dbReference>
<dbReference type="GO" id="GO:0003341">
    <property type="term" value="P:cilium movement"/>
    <property type="evidence" value="ECO:0000315"/>
    <property type="project" value="SYSCILIA_CCNET"/>
</dbReference>
<dbReference type="GO" id="GO:0071907">
    <property type="term" value="P:determination of digestive tract left/right asymmetry"/>
    <property type="evidence" value="ECO:0000315"/>
    <property type="project" value="BHF-UCL"/>
</dbReference>
<dbReference type="GO" id="GO:0071910">
    <property type="term" value="P:determination of liver left/right asymmetry"/>
    <property type="evidence" value="ECO:0000315"/>
    <property type="project" value="BHF-UCL"/>
</dbReference>
<dbReference type="GO" id="GO:0035469">
    <property type="term" value="P:determination of pancreatic left/right asymmetry"/>
    <property type="evidence" value="ECO:0000315"/>
    <property type="project" value="BHF-UCL"/>
</dbReference>
<dbReference type="GO" id="GO:0060287">
    <property type="term" value="P:epithelial cilium movement involved in determination of left/right asymmetry"/>
    <property type="evidence" value="ECO:0000315"/>
    <property type="project" value="UniProtKB"/>
</dbReference>
<dbReference type="GO" id="GO:0003351">
    <property type="term" value="P:epithelial cilium movement involved in extracellular fluid movement"/>
    <property type="evidence" value="ECO:0000315"/>
    <property type="project" value="BHF-UCL"/>
</dbReference>
<dbReference type="GO" id="GO:0030317">
    <property type="term" value="P:flagellated sperm motility"/>
    <property type="evidence" value="ECO:0000315"/>
    <property type="project" value="SYSCILIA_CCNET"/>
</dbReference>
<dbReference type="GO" id="GO:0001947">
    <property type="term" value="P:heart looping"/>
    <property type="evidence" value="ECO:0000315"/>
    <property type="project" value="BHF-UCL"/>
</dbReference>
<dbReference type="GO" id="GO:0036159">
    <property type="term" value="P:inner dynein arm assembly"/>
    <property type="evidence" value="ECO:0000315"/>
    <property type="project" value="SYSCILIA_CCNET"/>
</dbReference>
<dbReference type="GO" id="GO:0030324">
    <property type="term" value="P:lung development"/>
    <property type="evidence" value="ECO:0000315"/>
    <property type="project" value="BHF-UCL"/>
</dbReference>
<dbReference type="GO" id="GO:0044458">
    <property type="term" value="P:motile cilium assembly"/>
    <property type="evidence" value="ECO:0000315"/>
    <property type="project" value="SYSCILIA_CCNET"/>
</dbReference>
<dbReference type="GO" id="GO:0061512">
    <property type="term" value="P:protein localization to cilium"/>
    <property type="evidence" value="ECO:0007669"/>
    <property type="project" value="Ensembl"/>
</dbReference>
<dbReference type="GO" id="GO:0003356">
    <property type="term" value="P:regulation of cilium beat frequency"/>
    <property type="evidence" value="ECO:0000315"/>
    <property type="project" value="BHF-UCL"/>
</dbReference>
<dbReference type="InterPro" id="IPR037386">
    <property type="entry name" value="CCDC40"/>
</dbReference>
<dbReference type="PANTHER" id="PTHR16275">
    <property type="entry name" value="COILED-COIL DOMAIN-CONTAINING PROTEIN 40"/>
    <property type="match status" value="1"/>
</dbReference>
<dbReference type="PANTHER" id="PTHR16275:SF8">
    <property type="entry name" value="COILED-COIL DOMAIN-CONTAINING PROTEIN 40"/>
    <property type="match status" value="1"/>
</dbReference>
<dbReference type="Pfam" id="PF08647">
    <property type="entry name" value="BRE1"/>
    <property type="match status" value="1"/>
</dbReference>
<sequence>MAEPGGAAGRSHPEDGSASEGEKEGNNESHMVSPPEKDDGQKGEEAVGSTEHPEEVTTQAEAAIEEGEVETEGEAAVEGEEEAVSYGDAESEEEYYYTETSSPEGQISAADTTYPYFSPPQELPGEEAYDSVSGEAGLQGFQQEATGPPESRERRVTSPEPSHGVLGPSEQMGQVTSGPAVGRLTGSTEEPQGQVLPMGVQHRFRLSHGSDIESSDLEEFVSQEPVIPPGVPDAHPREGDLPVFQDQIQQPSTEEGAMAERVESEGSDEEAEDEGSQLVVLDPDHPLMVRFQAALKNYLNRQIEKLKLDLQELVVATKQSRAQRQELGVNLYEVQQHLVHLQKLLEKSHDRHAMASSERRQKEEELQAARALYTKTCAAANEERKKLAALQTEMENLALHLFYMQNIDQDMRDDIRVMTQVVKKAETERIRAEIEKKKQDLYVDQLTTRAQQLEEDIALFEAQYLAQAEDTRILRKAVSEACTEIDAISVEKRRIMQQWASSLVGMKHRDEAHRAVLEALRGCQHQAKSTDGEIEAYKKSIMKEEEKNEKLASILNRTETEATLLQKLTTQCLTKQVALQSQFNTYRLTLQDTEDALSQDQLEQMILTEELQAIRQAIQGELELRRKTDAAIREKLQEHMTSNKTTKYFNQLILRLQKEKTNMMTHLSKINGDIAQTTLDITHTSSRLDAHQKTLVELDQDVKKVNELITNSQSEISRRTILIERKQGLINFLNKQLERMVSELGGEEVGPLELEIKRLSKLIDEHDGKAVQAQVTWLRLQQEMVKVTQEQEEQLASLDASKKELHIMEQKKLRVESKIEQEKKEQKEIEHHMKDLDNDLKKLNMLMNKNRCSSEELEQNNRVTENEFVRSLKASERETIKMQDKLNQLSEEKATLLNQLVEAEHQIMLWEKKIQLAKEMRSSVDSEIGQTEIRAMKGEIHRMKVRLGQLLKQQEKMIRAMELAVARRETVTTQAEGQRKMDRKALTRTDFHHKQLELRRKIRDVRKATDECTKTVLELEETQRNVSSSLLEKQEKLSVIQADFDTLEADLTRLGALKRQNLSEIVALQTRLKHLQAVKEGRYVFLFRSKQSLVLERQRLDKRLALIATILDRVRDEYPQFQEALHKVSQMIANKLESPGPS</sequence>